<protein>
    <recommendedName>
        <fullName evidence="3">Nautilin-63</fullName>
        <shortName evidence="3">N63</shortName>
    </recommendedName>
</protein>
<evidence type="ECO:0000256" key="1">
    <source>
        <dbReference type="SAM" id="MobiDB-lite"/>
    </source>
</evidence>
<evidence type="ECO:0000269" key="2">
    <source>
    </source>
</evidence>
<evidence type="ECO:0000303" key="3">
    <source>
    </source>
</evidence>
<evidence type="ECO:0000305" key="4"/>
<reference evidence="4" key="1">
    <citation type="journal article" date="2011" name="FEBS J.">
        <title>Nautilin-63, a novel acidic glycoprotein from the shell nacre of Nautilus macromphalus.</title>
        <authorList>
            <person name="Marie B."/>
            <person name="Zanella-Cleon I."/>
            <person name="Corneillat M."/>
            <person name="Becchi M."/>
            <person name="Alcaraz G."/>
            <person name="Plasseraud L."/>
            <person name="Luquet G."/>
            <person name="Marin F."/>
        </authorList>
    </citation>
    <scope>PROTEIN SEQUENCE</scope>
    <scope>FUNCTION</scope>
    <scope>SUBCELLULAR LOCATION</scope>
    <scope>TISSUE SPECIFICITY</scope>
    <scope>GLYCOSYLATION</scope>
    <source>
        <tissue evidence="2">Nacre</tissue>
    </source>
</reference>
<feature type="chain" id="PRO_0000398789" description="Nautilin-63">
    <location>
        <begin position="1" status="less than"/>
        <end position="316" status="greater than"/>
    </location>
</feature>
<feature type="region of interest" description="Disordered" evidence="1">
    <location>
        <begin position="1"/>
        <end position="26"/>
    </location>
</feature>
<feature type="region of interest" description="Disordered" evidence="1">
    <location>
        <begin position="149"/>
        <end position="173"/>
    </location>
</feature>
<feature type="region of interest" description="Disordered" evidence="1">
    <location>
        <begin position="189"/>
        <end position="238"/>
    </location>
</feature>
<feature type="region of interest" description="Disordered" evidence="1">
    <location>
        <begin position="259"/>
        <end position="278"/>
    </location>
</feature>
<feature type="compositionally biased region" description="Low complexity" evidence="1">
    <location>
        <begin position="10"/>
        <end position="26"/>
    </location>
</feature>
<feature type="compositionally biased region" description="Polar residues" evidence="1">
    <location>
        <begin position="152"/>
        <end position="163"/>
    </location>
</feature>
<feature type="compositionally biased region" description="Polar residues" evidence="1">
    <location>
        <begin position="207"/>
        <end position="216"/>
    </location>
</feature>
<feature type="compositionally biased region" description="Polar residues" evidence="1">
    <location>
        <begin position="269"/>
        <end position="278"/>
    </location>
</feature>
<feature type="unsure residue" description="I or L" evidence="2">
    <location>
        <position position="1"/>
    </location>
</feature>
<feature type="unsure residue" description="L or I" evidence="2">
    <location>
        <position position="4"/>
    </location>
</feature>
<feature type="unsure residue" description="L or I" evidence="2">
    <location>
        <position position="11"/>
    </location>
</feature>
<feature type="unsure residue" description="L or I" evidence="2">
    <location>
        <position position="14"/>
    </location>
</feature>
<feature type="unsure residue" description="L or I" evidence="2">
    <location>
        <position position="21"/>
    </location>
</feature>
<feature type="unsure residue" description="L or I" evidence="2">
    <location>
        <position position="22"/>
    </location>
</feature>
<feature type="unsure residue" description="L or I" evidence="2">
    <location>
        <position position="31"/>
    </location>
</feature>
<feature type="unsure residue" description="I or L" evidence="2">
    <location>
        <position position="36"/>
    </location>
</feature>
<feature type="unsure residue" description="L or I" evidence="2">
    <location>
        <position position="38"/>
    </location>
</feature>
<feature type="unsure residue" description="L or I" evidence="2">
    <location>
        <position position="50"/>
    </location>
</feature>
<feature type="unsure residue" description="L or I" evidence="2">
    <location>
        <position position="58"/>
    </location>
</feature>
<feature type="unsure residue" description="L or I" evidence="2">
    <location>
        <position position="61"/>
    </location>
</feature>
<feature type="unsure residue" description="L or I" evidence="2">
    <location>
        <position position="63"/>
    </location>
</feature>
<feature type="unsure residue" description="L or I" evidence="2">
    <location>
        <position position="81"/>
    </location>
</feature>
<feature type="unsure residue" description="I or L" evidence="2">
    <location>
        <position position="86"/>
    </location>
</feature>
<feature type="unsure residue" description="L or I" evidence="2">
    <location>
        <position position="88"/>
    </location>
</feature>
<feature type="unsure residue" description="L or I" evidence="2">
    <location>
        <position position="102"/>
    </location>
</feature>
<feature type="unsure residue" description="L or I" evidence="2">
    <location>
        <position position="141"/>
    </location>
</feature>
<feature type="unsure residue" description="L or I" evidence="2">
    <location>
        <position position="179"/>
    </location>
</feature>
<feature type="unsure residue" description="L or I" evidence="2">
    <location>
        <position position="185"/>
    </location>
</feature>
<feature type="unsure residue" description="L or I" evidence="2">
    <location>
        <position position="214"/>
    </location>
</feature>
<feature type="unsure residue" description="L or I" evidence="2">
    <location>
        <position position="232"/>
    </location>
</feature>
<feature type="unsure residue" description="I or L" evidence="2">
    <location>
        <position position="236"/>
    </location>
</feature>
<feature type="unsure residue" description="L or I" evidence="2">
    <location>
        <position position="241"/>
    </location>
</feature>
<feature type="unsure residue" description="L or I" evidence="2">
    <location>
        <position position="244"/>
    </location>
</feature>
<feature type="unsure residue" description="L or I" evidence="2">
    <location>
        <position position="248"/>
    </location>
</feature>
<feature type="unsure residue" description="L or I" evidence="2">
    <location>
        <position position="256"/>
    </location>
</feature>
<feature type="unsure residue" description="L or I" evidence="2">
    <location>
        <position position="276"/>
    </location>
</feature>
<feature type="unsure residue" description="L or I" evidence="2">
    <location>
        <position position="286"/>
    </location>
</feature>
<feature type="unsure residue" description="L or I" evidence="2">
    <location>
        <position position="300"/>
    </location>
</feature>
<feature type="unsure residue" description="L or I" evidence="2">
    <location>
        <position position="307"/>
    </location>
</feature>
<feature type="unsure residue" description="L or I" evidence="2">
    <location>
        <position position="310"/>
    </location>
</feature>
<feature type="non-consecutive residues" evidence="3">
    <location>
        <begin position="8"/>
        <end position="9"/>
    </location>
</feature>
<feature type="non-consecutive residues" evidence="3">
    <location>
        <begin position="16"/>
        <end position="17"/>
    </location>
</feature>
<feature type="non-consecutive residues" evidence="3">
    <location>
        <begin position="25"/>
        <end position="26"/>
    </location>
</feature>
<feature type="non-consecutive residues" evidence="3">
    <location>
        <begin position="33"/>
        <end position="34"/>
    </location>
</feature>
<feature type="non-consecutive residues" evidence="3">
    <location>
        <begin position="41"/>
        <end position="42"/>
    </location>
</feature>
<feature type="non-consecutive residues" evidence="3">
    <location>
        <begin position="52"/>
        <end position="53"/>
    </location>
</feature>
<feature type="non-consecutive residues" evidence="3">
    <location>
        <begin position="60"/>
        <end position="61"/>
    </location>
</feature>
<feature type="non-consecutive residues" evidence="3">
    <location>
        <begin position="69"/>
        <end position="70"/>
    </location>
</feature>
<feature type="non-consecutive residues" evidence="3">
    <location>
        <begin position="78"/>
        <end position="79"/>
    </location>
</feature>
<feature type="non-consecutive residues" evidence="3">
    <location>
        <begin position="87"/>
        <end position="88"/>
    </location>
</feature>
<feature type="non-consecutive residues" evidence="3">
    <location>
        <begin position="97"/>
        <end position="98"/>
    </location>
</feature>
<feature type="non-consecutive residues" evidence="3">
    <location>
        <begin position="108"/>
        <end position="109"/>
    </location>
</feature>
<feature type="non-consecutive residues" evidence="3">
    <location>
        <begin position="118"/>
        <end position="119"/>
    </location>
</feature>
<feature type="non-consecutive residues" evidence="3">
    <location>
        <begin position="130"/>
        <end position="131"/>
    </location>
</feature>
<feature type="non-consecutive residues" evidence="3">
    <location>
        <begin position="142"/>
        <end position="143"/>
    </location>
</feature>
<feature type="non-consecutive residues" evidence="3">
    <location>
        <begin position="154"/>
        <end position="155"/>
    </location>
</feature>
<feature type="non-consecutive residues" evidence="3">
    <location>
        <begin position="166"/>
        <end position="167"/>
    </location>
</feature>
<feature type="non-consecutive residues" evidence="3">
    <location>
        <begin position="180"/>
        <end position="181"/>
    </location>
</feature>
<feature type="non-consecutive residues" evidence="3">
    <location>
        <begin position="191"/>
        <end position="192"/>
    </location>
</feature>
<feature type="non-consecutive residues" evidence="3">
    <location>
        <begin position="201"/>
        <end position="202"/>
    </location>
</feature>
<feature type="non-consecutive residues" evidence="3">
    <location>
        <begin position="217"/>
        <end position="218"/>
    </location>
</feature>
<feature type="non-consecutive residues" evidence="3">
    <location>
        <begin position="233"/>
        <end position="234"/>
    </location>
</feature>
<feature type="non-consecutive residues" evidence="3">
    <location>
        <begin position="247"/>
        <end position="248"/>
    </location>
</feature>
<feature type="non-consecutive residues" evidence="3">
    <location>
        <begin position="261"/>
        <end position="262"/>
    </location>
</feature>
<feature type="non-consecutive residues" evidence="3">
    <location>
        <begin position="278"/>
        <end position="279"/>
    </location>
</feature>
<feature type="non-consecutive residues" evidence="3">
    <location>
        <begin position="298"/>
        <end position="299"/>
    </location>
</feature>
<feature type="non-terminal residue" evidence="3">
    <location>
        <position position="1"/>
    </location>
</feature>
<feature type="non-terminal residue" evidence="3">
    <location>
        <position position="316"/>
    </location>
</feature>
<organism>
    <name type="scientific">Nautilus macromphalus</name>
    <name type="common">Bellybutton nautilus</name>
    <dbReference type="NCBI Taxonomy" id="34576"/>
    <lineage>
        <taxon>Eukaryota</taxon>
        <taxon>Metazoa</taxon>
        <taxon>Spiralia</taxon>
        <taxon>Lophotrochozoa</taxon>
        <taxon>Mollusca</taxon>
        <taxon>Cephalopoda</taxon>
        <taxon>Nautiloidea</taxon>
        <taxon>Nautilida</taxon>
        <taxon>Nautilidae</taxon>
        <taxon>Nautilus</taxon>
    </lineage>
</organism>
<accession>P86702</accession>
<sequence length="316" mass="32939">IPDLASSRSTLPVLTKGPTGLLGPRGPYGPLQRFNIELSARGPAAVVGVLGKSFDSWLTKLGLPGPQGRPGPPGPGCRFALSNQCIKLAVEFAGQSKFSSFLANEGKKEGPEGEEGPRTEFDGAYFAGGKFPVVGKPFPQLKVFHAEPPFPTSRSTYGPSGSQPGKKGVVTPFKGNQPLKFNDFLVESDSRCPPDDSSFERSPAVSGHSSPATLNSRMKPAGFPGKGNGAPLKNGIASDPLENLKNRLGSCFPDVLDEPPTSPFFTGPSGYTSDGLNKTPTVSKTLTAAGDPGPGAGKVLESSKTDLVALQGEFQR</sequence>
<keyword id="KW-0147">Chitin-binding</keyword>
<keyword id="KW-0903">Direct protein sequencing</keyword>
<keyword id="KW-0325">Glycoprotein</keyword>
<keyword id="KW-0964">Secreted</keyword>
<name>NAUT_NAUMA</name>
<proteinExistence type="evidence at protein level"/>
<dbReference type="GO" id="GO:0005576">
    <property type="term" value="C:extracellular region"/>
    <property type="evidence" value="ECO:0000314"/>
    <property type="project" value="UniProtKB"/>
</dbReference>
<dbReference type="GO" id="GO:0008061">
    <property type="term" value="F:chitin binding"/>
    <property type="evidence" value="ECO:0000314"/>
    <property type="project" value="UniProtKB"/>
</dbReference>
<dbReference type="GO" id="GO:0031215">
    <property type="term" value="P:shell calcification"/>
    <property type="evidence" value="ECO:0000314"/>
    <property type="project" value="UniProtKB"/>
</dbReference>
<comment type="function">
    <text evidence="2">Involved in nacre formation. Affects morphology of calcite crystals in vitro but does not inhibit their formation. Binds chitin.</text>
</comment>
<comment type="subcellular location">
    <subcellularLocation>
        <location evidence="2">Secreted</location>
    </subcellularLocation>
</comment>
<comment type="tissue specificity">
    <text evidence="2">Component of the acid-soluble organic matrix of nacreous shell layers (at protein level).</text>
</comment>
<comment type="PTM">
    <text evidence="2">Glycosylated; contains mainly glucose, galactose, galactosamine, glucosamine and glucuronic acid.</text>
</comment>
<comment type="caution">
    <text evidence="2">The order of the peptides shown is unknown.</text>
</comment>